<evidence type="ECO:0000255" key="1"/>
<evidence type="ECO:0000255" key="2">
    <source>
        <dbReference type="PROSITE-ProRule" id="PRU00159"/>
    </source>
</evidence>
<evidence type="ECO:0000255" key="3">
    <source>
        <dbReference type="PROSITE-ProRule" id="PRU10027"/>
    </source>
</evidence>
<evidence type="ECO:0000269" key="4">
    <source>
    </source>
</evidence>
<evidence type="ECO:0000269" key="5">
    <source>
    </source>
</evidence>
<evidence type="ECO:0000305" key="6"/>
<accession>Q5Z9N5</accession>
<accession>A0A0P0X1D4</accession>
<accession>A3BFF7</accession>
<accession>Q8SB35</accession>
<organism>
    <name type="scientific">Oryza sativa subsp. japonica</name>
    <name type="common">Rice</name>
    <dbReference type="NCBI Taxonomy" id="39947"/>
    <lineage>
        <taxon>Eukaryota</taxon>
        <taxon>Viridiplantae</taxon>
        <taxon>Streptophyta</taxon>
        <taxon>Embryophyta</taxon>
        <taxon>Tracheophyta</taxon>
        <taxon>Spermatophyta</taxon>
        <taxon>Magnoliopsida</taxon>
        <taxon>Liliopsida</taxon>
        <taxon>Poales</taxon>
        <taxon>Poaceae</taxon>
        <taxon>BOP clade</taxon>
        <taxon>Oryzoideae</taxon>
        <taxon>Oryzeae</taxon>
        <taxon>Oryzinae</taxon>
        <taxon>Oryza</taxon>
        <taxon>Oryza sativa</taxon>
    </lineage>
</organism>
<gene>
    <name type="primary">FON1</name>
    <name type="ordered locus">Os06g0717200</name>
    <name type="ordered locus">LOC_Os06g50340</name>
    <name type="ORF">OJ1540_H01.10</name>
    <name type="ORF">OsJ_22674</name>
    <name type="ORF">P0481E08.42</name>
    <name type="ORF">P0541C02.9</name>
</gene>
<protein>
    <recommendedName>
        <fullName>Leucine-rich repeat receptor-like kinase protein FLORAL ORGAN NUMBER1</fullName>
        <shortName>OsFON1</shortName>
        <ecNumber>2.7.11.1</ecNumber>
    </recommendedName>
    <alternativeName>
        <fullName>CLV1-like LRR receptor kinase</fullName>
    </alternativeName>
</protein>
<sequence length="994" mass="105512">MPPTLLLLLLLLPPSLASPDRDIYALAKLKAALVPSPSATAPPPLADWDPAATSPAHCTFSGVTCDGRSRVVAINLTALPLHSGYLPPEIALLDSLANLTIAACCLPGHVPLELPTLPSLRHLNLSNNNLSGHFPVPDSGGGASPYFPSLELIDAYNNNLSGLLPPFSASHARLRYLHLGGNYFTGAIPDSYGDLAALEYLGLNGNTLSGHVPVSLSRLTRLREMYIGYYNQYDGGVPPEFGDLGALLRLDMSSCNLTGPVPPELGRLQRLDTLFLQWNRLSGEIPPQLGDLSSLASLDLSVNDLAGEIPPSLANLSNLKLLNLFRNHLRGSIPDFVAGFAQLEVLQLWDNNLTGNIPAGLGKNGRLKTLDLATNHLTGPIPADLCAGRRLEMLVLMENGLFGPIPDSLGDCKTLTRVRLAKNFLTGPVPAGLFNLPQANMVELTDNLLTGELPDVIGGDKIGMLLLGNNGIGGRIPPAIGNLPALQTLSLESNNFSGALPPEIGNLKNLSRLNVSGNALTGAIPDELIRCASLAAVDLSRNGFSGEIPESITSLKILCTLNVSRNRLTGELPPEMSNMTSLTTLDVSYNSLSGPVPMQGQFLVFNESSFVGNPGLCGGPVADACPPSMAGGGGGAGSQLRLRWDSKKMLVALVAAFAAVAVAFLGARKGCSAWRSAARRRSGAWKMTAFQKLEFSAEDVVECVKEDNIIGKGGAGIVYHGVTRGAELAIKRLVGRGGGEHDRGFSAEVTTLGRIRHRNIVRLLGFVSNRETNLLLYEYMPNGSLGEMLHGGKGGHLGWEARARVAAEAACGLCYLHHDCAPRIIHRDVKSNNILLDSAFEAHVADFGLAKFLGGATSECMSAIAGSYGYIAPEYAYTLRVDEKSDVYSFGVVLLELITGRRPVGGFGDGVDIVHWVRKVTAELPDNSDTAAVLAVADRRLTPEPVALMVNLYKVAMACVEEASTARPTMREVVHMLSNPNSAQPNSGDLLVTF</sequence>
<comment type="function">
    <text evidence="4">Receptor-like kinase protein that regulates the size of the floral meristem.</text>
</comment>
<comment type="catalytic activity">
    <reaction>
        <text>L-seryl-[protein] + ATP = O-phospho-L-seryl-[protein] + ADP + H(+)</text>
        <dbReference type="Rhea" id="RHEA:17989"/>
        <dbReference type="Rhea" id="RHEA-COMP:9863"/>
        <dbReference type="Rhea" id="RHEA-COMP:11604"/>
        <dbReference type="ChEBI" id="CHEBI:15378"/>
        <dbReference type="ChEBI" id="CHEBI:29999"/>
        <dbReference type="ChEBI" id="CHEBI:30616"/>
        <dbReference type="ChEBI" id="CHEBI:83421"/>
        <dbReference type="ChEBI" id="CHEBI:456216"/>
        <dbReference type="EC" id="2.7.11.1"/>
    </reaction>
</comment>
<comment type="catalytic activity">
    <reaction>
        <text>L-threonyl-[protein] + ATP = O-phospho-L-threonyl-[protein] + ADP + H(+)</text>
        <dbReference type="Rhea" id="RHEA:46608"/>
        <dbReference type="Rhea" id="RHEA-COMP:11060"/>
        <dbReference type="Rhea" id="RHEA-COMP:11605"/>
        <dbReference type="ChEBI" id="CHEBI:15378"/>
        <dbReference type="ChEBI" id="CHEBI:30013"/>
        <dbReference type="ChEBI" id="CHEBI:30616"/>
        <dbReference type="ChEBI" id="CHEBI:61977"/>
        <dbReference type="ChEBI" id="CHEBI:456216"/>
        <dbReference type="EC" id="2.7.11.1"/>
    </reaction>
</comment>
<comment type="subcellular location">
    <subcellularLocation>
        <location evidence="6">Membrane</location>
        <topology evidence="6">Single-pass membrane protein</topology>
    </subcellularLocation>
</comment>
<comment type="tissue specificity">
    <text evidence="4">Expressed in shoot apical meristem, and after transition to the reproductive phase, detected in the inflorescence and the floral meristems. Expressed uniformly throughout the meristems. Expressed also in floral organ primordia, such as the palea, lemma, lodicules, stamens, carpels and ovules.</text>
</comment>
<comment type="developmental stage">
    <text evidence="4">Expressed in the floral meristem even after the initiation of carpel primordia.</text>
</comment>
<comment type="disruption phenotype">
    <text evidence="5">Semi-dwarf with altered numbers of floral organs and rachis branches. Reduced number of tillers.</text>
</comment>
<comment type="similarity">
    <text evidence="2">Belongs to the protein kinase superfamily. Ser/Thr protein kinase family.</text>
</comment>
<comment type="sequence caution" evidence="6">
    <conflict type="erroneous gene model prediction">
        <sequence resource="EMBL-CDS" id="EAZ38296"/>
    </conflict>
</comment>
<name>FON1_ORYSJ</name>
<reference key="1">
    <citation type="journal article" date="2004" name="Development">
        <title>The gene FLORAL ORGAN NUMBER1 regulates floral meristem size in rice and encodes a leucine-rich repeat receptor kinase orthologous to Arabidopsis CLAVATA1.</title>
        <authorList>
            <person name="Suzaki T."/>
            <person name="Sato M."/>
            <person name="Ashikari M."/>
            <person name="Miyoshi M."/>
            <person name="Nagato Y."/>
            <person name="Hirano H.Y."/>
        </authorList>
    </citation>
    <scope>NUCLEOTIDE SEQUENCE [GENOMIC DNA / MRNA]</scope>
    <scope>FUNCTION</scope>
    <scope>MUTAGENESIS OF GLY-205 AND PRO-903</scope>
    <scope>TISSUE SPECIFICITY</scope>
    <scope>DEVELOPMENTAL STAGE</scope>
</reference>
<reference key="2">
    <citation type="journal article" date="2005" name="Nature">
        <title>The map-based sequence of the rice genome.</title>
        <authorList>
            <consortium name="International rice genome sequencing project (IRGSP)"/>
        </authorList>
    </citation>
    <scope>NUCLEOTIDE SEQUENCE [LARGE SCALE GENOMIC DNA]</scope>
    <source>
        <strain>cv. Nipponbare</strain>
    </source>
</reference>
<reference key="3">
    <citation type="journal article" date="2008" name="Nucleic Acids Res.">
        <title>The rice annotation project database (RAP-DB): 2008 update.</title>
        <authorList>
            <consortium name="The rice annotation project (RAP)"/>
        </authorList>
    </citation>
    <scope>GENOME REANNOTATION</scope>
    <source>
        <strain>cv. Nipponbare</strain>
    </source>
</reference>
<reference key="4">
    <citation type="journal article" date="2013" name="Rice">
        <title>Improvement of the Oryza sativa Nipponbare reference genome using next generation sequence and optical map data.</title>
        <authorList>
            <person name="Kawahara Y."/>
            <person name="de la Bastide M."/>
            <person name="Hamilton J.P."/>
            <person name="Kanamori H."/>
            <person name="McCombie W.R."/>
            <person name="Ouyang S."/>
            <person name="Schwartz D.C."/>
            <person name="Tanaka T."/>
            <person name="Wu J."/>
            <person name="Zhou S."/>
            <person name="Childs K.L."/>
            <person name="Davidson R.M."/>
            <person name="Lin H."/>
            <person name="Quesada-Ocampo L."/>
            <person name="Vaillancourt B."/>
            <person name="Sakai H."/>
            <person name="Lee S.S."/>
            <person name="Kim J."/>
            <person name="Numa H."/>
            <person name="Itoh T."/>
            <person name="Buell C.R."/>
            <person name="Matsumoto T."/>
        </authorList>
    </citation>
    <scope>GENOME REANNOTATION</scope>
    <source>
        <strain>cv. Nipponbare</strain>
    </source>
</reference>
<reference key="5">
    <citation type="journal article" date="2005" name="PLoS Biol.">
        <title>The genomes of Oryza sativa: a history of duplications.</title>
        <authorList>
            <person name="Yu J."/>
            <person name="Wang J."/>
            <person name="Lin W."/>
            <person name="Li S."/>
            <person name="Li H."/>
            <person name="Zhou J."/>
            <person name="Ni P."/>
            <person name="Dong W."/>
            <person name="Hu S."/>
            <person name="Zeng C."/>
            <person name="Zhang J."/>
            <person name="Zhang Y."/>
            <person name="Li R."/>
            <person name="Xu Z."/>
            <person name="Li S."/>
            <person name="Li X."/>
            <person name="Zheng H."/>
            <person name="Cong L."/>
            <person name="Lin L."/>
            <person name="Yin J."/>
            <person name="Geng J."/>
            <person name="Li G."/>
            <person name="Shi J."/>
            <person name="Liu J."/>
            <person name="Lv H."/>
            <person name="Li J."/>
            <person name="Wang J."/>
            <person name="Deng Y."/>
            <person name="Ran L."/>
            <person name="Shi X."/>
            <person name="Wang X."/>
            <person name="Wu Q."/>
            <person name="Li C."/>
            <person name="Ren X."/>
            <person name="Wang J."/>
            <person name="Wang X."/>
            <person name="Li D."/>
            <person name="Liu D."/>
            <person name="Zhang X."/>
            <person name="Ji Z."/>
            <person name="Zhao W."/>
            <person name="Sun Y."/>
            <person name="Zhang Z."/>
            <person name="Bao J."/>
            <person name="Han Y."/>
            <person name="Dong L."/>
            <person name="Ji J."/>
            <person name="Chen P."/>
            <person name="Wu S."/>
            <person name="Liu J."/>
            <person name="Xiao Y."/>
            <person name="Bu D."/>
            <person name="Tan J."/>
            <person name="Yang L."/>
            <person name="Ye C."/>
            <person name="Zhang J."/>
            <person name="Xu J."/>
            <person name="Zhou Y."/>
            <person name="Yu Y."/>
            <person name="Zhang B."/>
            <person name="Zhuang S."/>
            <person name="Wei H."/>
            <person name="Liu B."/>
            <person name="Lei M."/>
            <person name="Yu H."/>
            <person name="Li Y."/>
            <person name="Xu H."/>
            <person name="Wei S."/>
            <person name="He X."/>
            <person name="Fang L."/>
            <person name="Zhang Z."/>
            <person name="Zhang Y."/>
            <person name="Huang X."/>
            <person name="Su Z."/>
            <person name="Tong W."/>
            <person name="Li J."/>
            <person name="Tong Z."/>
            <person name="Li S."/>
            <person name="Ye J."/>
            <person name="Wang L."/>
            <person name="Fang L."/>
            <person name="Lei T."/>
            <person name="Chen C.-S."/>
            <person name="Chen H.-C."/>
            <person name="Xu Z."/>
            <person name="Li H."/>
            <person name="Huang H."/>
            <person name="Zhang F."/>
            <person name="Xu H."/>
            <person name="Li N."/>
            <person name="Zhao C."/>
            <person name="Li S."/>
            <person name="Dong L."/>
            <person name="Huang Y."/>
            <person name="Li L."/>
            <person name="Xi Y."/>
            <person name="Qi Q."/>
            <person name="Li W."/>
            <person name="Zhang B."/>
            <person name="Hu W."/>
            <person name="Zhang Y."/>
            <person name="Tian X."/>
            <person name="Jiao Y."/>
            <person name="Liang X."/>
            <person name="Jin J."/>
            <person name="Gao L."/>
            <person name="Zheng W."/>
            <person name="Hao B."/>
            <person name="Liu S.-M."/>
            <person name="Wang W."/>
            <person name="Yuan L."/>
            <person name="Cao M."/>
            <person name="McDermott J."/>
            <person name="Samudrala R."/>
            <person name="Wang J."/>
            <person name="Wong G.K.-S."/>
            <person name="Yang H."/>
        </authorList>
    </citation>
    <scope>NUCLEOTIDE SEQUENCE [LARGE SCALE GENOMIC DNA]</scope>
    <source>
        <strain>cv. Nipponbare</strain>
    </source>
</reference>
<reference key="6">
    <citation type="journal article" date="2006" name="Mol. Cells">
        <title>The rice FON1 gene controls vegetative and reproductive development by regulating shoot apical meristem size.</title>
        <authorList>
            <person name="Moon S."/>
            <person name="Jung K.H."/>
            <person name="Lee D.E."/>
            <person name="Lee D.Y."/>
            <person name="Lee J."/>
            <person name="An K."/>
            <person name="Kang H.G."/>
            <person name="An G."/>
        </authorList>
    </citation>
    <scope>DISRUPTION PHENOTYPE</scope>
</reference>
<dbReference type="EC" id="2.7.11.1"/>
<dbReference type="EMBL" id="AB182388">
    <property type="protein sequence ID" value="BAD82811.1"/>
    <property type="molecule type" value="mRNA"/>
</dbReference>
<dbReference type="EMBL" id="AB182389">
    <property type="protein sequence ID" value="BAD82812.1"/>
    <property type="molecule type" value="Genomic_DNA"/>
</dbReference>
<dbReference type="EMBL" id="AC091774">
    <property type="protein sequence ID" value="AAL79717.1"/>
    <property type="molecule type" value="Genomic_DNA"/>
</dbReference>
<dbReference type="EMBL" id="AP003614">
    <property type="protein sequence ID" value="BAD53588.1"/>
    <property type="molecule type" value="Genomic_DNA"/>
</dbReference>
<dbReference type="EMBL" id="AP003769">
    <property type="protein sequence ID" value="BAD61718.1"/>
    <property type="molecule type" value="Genomic_DNA"/>
</dbReference>
<dbReference type="EMBL" id="AP008212">
    <property type="protein sequence ID" value="BAF20507.1"/>
    <property type="molecule type" value="Genomic_DNA"/>
</dbReference>
<dbReference type="EMBL" id="AP014962">
    <property type="protein sequence ID" value="BAS99515.1"/>
    <property type="molecule type" value="Genomic_DNA"/>
</dbReference>
<dbReference type="EMBL" id="CM000143">
    <property type="protein sequence ID" value="EAZ38296.1"/>
    <property type="status" value="ALT_SEQ"/>
    <property type="molecule type" value="Genomic_DNA"/>
</dbReference>
<dbReference type="RefSeq" id="XP_015642501.1">
    <property type="nucleotide sequence ID" value="XM_015787015.1"/>
</dbReference>
<dbReference type="SMR" id="Q5Z9N5"/>
<dbReference type="FunCoup" id="Q5Z9N5">
    <property type="interactions" value="1602"/>
</dbReference>
<dbReference type="STRING" id="39947.Q5Z9N5"/>
<dbReference type="GlyCosmos" id="Q5Z9N5">
    <property type="glycosylation" value="14 sites, No reported glycans"/>
</dbReference>
<dbReference type="PaxDb" id="39947-Q5Z9N5"/>
<dbReference type="EnsemblPlants" id="Os06t0717200-01">
    <property type="protein sequence ID" value="Os06t0717200-01"/>
    <property type="gene ID" value="Os06g0717200"/>
</dbReference>
<dbReference type="Gramene" id="Os06t0717200-01">
    <property type="protein sequence ID" value="Os06t0717200-01"/>
    <property type="gene ID" value="Os06g0717200"/>
</dbReference>
<dbReference type="KEGG" id="dosa:Os06g0717200"/>
<dbReference type="eggNOG" id="ENOG502QQ4T">
    <property type="taxonomic scope" value="Eukaryota"/>
</dbReference>
<dbReference type="HOGENOM" id="CLU_000288_22_1_1"/>
<dbReference type="InParanoid" id="Q5Z9N5"/>
<dbReference type="OMA" id="GQFMVFN"/>
<dbReference type="OrthoDB" id="676979at2759"/>
<dbReference type="Proteomes" id="UP000000763">
    <property type="component" value="Chromosome 6"/>
</dbReference>
<dbReference type="Proteomes" id="UP000007752">
    <property type="component" value="Chromosome 6"/>
</dbReference>
<dbReference type="Proteomes" id="UP000059680">
    <property type="component" value="Chromosome 6"/>
</dbReference>
<dbReference type="GO" id="GO:0016020">
    <property type="term" value="C:membrane"/>
    <property type="evidence" value="ECO:0000318"/>
    <property type="project" value="GO_Central"/>
</dbReference>
<dbReference type="GO" id="GO:0005524">
    <property type="term" value="F:ATP binding"/>
    <property type="evidence" value="ECO:0007669"/>
    <property type="project" value="UniProtKB-KW"/>
</dbReference>
<dbReference type="GO" id="GO:0106310">
    <property type="term" value="F:protein serine kinase activity"/>
    <property type="evidence" value="ECO:0007669"/>
    <property type="project" value="RHEA"/>
</dbReference>
<dbReference type="GO" id="GO:0004674">
    <property type="term" value="F:protein serine/threonine kinase activity"/>
    <property type="evidence" value="ECO:0007669"/>
    <property type="project" value="UniProtKB-KW"/>
</dbReference>
<dbReference type="GO" id="GO:0033612">
    <property type="term" value="F:receptor serine/threonine kinase binding"/>
    <property type="evidence" value="ECO:0000318"/>
    <property type="project" value="GO_Central"/>
</dbReference>
<dbReference type="GO" id="GO:0030154">
    <property type="term" value="P:cell differentiation"/>
    <property type="evidence" value="ECO:0007669"/>
    <property type="project" value="UniProtKB-KW"/>
</dbReference>
<dbReference type="GO" id="GO:0010080">
    <property type="term" value="P:regulation of floral meristem growth"/>
    <property type="evidence" value="ECO:0000315"/>
    <property type="project" value="Gramene"/>
</dbReference>
<dbReference type="GO" id="GO:0048833">
    <property type="term" value="P:specification of floral organ number"/>
    <property type="evidence" value="ECO:0000315"/>
    <property type="project" value="Gramene"/>
</dbReference>
<dbReference type="FunFam" id="3.80.10.10:FF:000565">
    <property type="entry name" value="Leucine-rich repeat receptor-like kinase protein FLORAL ORGAN NUMBER1"/>
    <property type="match status" value="1"/>
</dbReference>
<dbReference type="FunFam" id="1.10.510.10:FF:000201">
    <property type="entry name" value="Leucine-rich repeat receptor-like serine/threonine-protein kinase"/>
    <property type="match status" value="1"/>
</dbReference>
<dbReference type="FunFam" id="3.30.200.20:FF:000292">
    <property type="entry name" value="Leucine-rich repeat receptor-like serine/threonine-protein kinase BAM1"/>
    <property type="match status" value="1"/>
</dbReference>
<dbReference type="FunFam" id="3.80.10.10:FF:000108">
    <property type="entry name" value="Leucine-rich repeat receptor-like serine/threonine-protein kinase BAM3"/>
    <property type="match status" value="1"/>
</dbReference>
<dbReference type="FunFam" id="3.80.10.10:FF:000371">
    <property type="entry name" value="Leucine-rich repeat receptor-like serine/threonine-protein kinase BAM3"/>
    <property type="match status" value="1"/>
</dbReference>
<dbReference type="FunFam" id="3.80.10.10:FF:000560">
    <property type="entry name" value="Leucine-rich repeat receptor-like serine/threonine-protein kinase BAM3"/>
    <property type="match status" value="1"/>
</dbReference>
<dbReference type="Gene3D" id="3.30.200.20">
    <property type="entry name" value="Phosphorylase Kinase, domain 1"/>
    <property type="match status" value="1"/>
</dbReference>
<dbReference type="Gene3D" id="3.80.10.10">
    <property type="entry name" value="Ribonuclease Inhibitor"/>
    <property type="match status" value="4"/>
</dbReference>
<dbReference type="Gene3D" id="1.10.510.10">
    <property type="entry name" value="Transferase(Phosphotransferase) domain 1"/>
    <property type="match status" value="1"/>
</dbReference>
<dbReference type="InterPro" id="IPR011009">
    <property type="entry name" value="Kinase-like_dom_sf"/>
</dbReference>
<dbReference type="InterPro" id="IPR001611">
    <property type="entry name" value="Leu-rich_rpt"/>
</dbReference>
<dbReference type="InterPro" id="IPR003591">
    <property type="entry name" value="Leu-rich_rpt_typical-subtyp"/>
</dbReference>
<dbReference type="InterPro" id="IPR032675">
    <property type="entry name" value="LRR_dom_sf"/>
</dbReference>
<dbReference type="InterPro" id="IPR013210">
    <property type="entry name" value="LRR_N_plant-typ"/>
</dbReference>
<dbReference type="InterPro" id="IPR050647">
    <property type="entry name" value="Plant_LRR-RLKs"/>
</dbReference>
<dbReference type="InterPro" id="IPR000719">
    <property type="entry name" value="Prot_kinase_dom"/>
</dbReference>
<dbReference type="InterPro" id="IPR001245">
    <property type="entry name" value="Ser-Thr/Tyr_kinase_cat_dom"/>
</dbReference>
<dbReference type="InterPro" id="IPR008271">
    <property type="entry name" value="Ser/Thr_kinase_AS"/>
</dbReference>
<dbReference type="PANTHER" id="PTHR48056">
    <property type="entry name" value="LRR RECEPTOR-LIKE SERINE/THREONINE-PROTEIN KINASE-RELATED"/>
    <property type="match status" value="1"/>
</dbReference>
<dbReference type="PANTHER" id="PTHR48056:SF44">
    <property type="entry name" value="RECEPTOR PROTEIN KINASE CLAVATA1"/>
    <property type="match status" value="1"/>
</dbReference>
<dbReference type="Pfam" id="PF00560">
    <property type="entry name" value="LRR_1"/>
    <property type="match status" value="10"/>
</dbReference>
<dbReference type="Pfam" id="PF13855">
    <property type="entry name" value="LRR_8"/>
    <property type="match status" value="1"/>
</dbReference>
<dbReference type="Pfam" id="PF08263">
    <property type="entry name" value="LRRNT_2"/>
    <property type="match status" value="1"/>
</dbReference>
<dbReference type="Pfam" id="PF07714">
    <property type="entry name" value="PK_Tyr_Ser-Thr"/>
    <property type="match status" value="1"/>
</dbReference>
<dbReference type="SMART" id="SM00369">
    <property type="entry name" value="LRR_TYP"/>
    <property type="match status" value="8"/>
</dbReference>
<dbReference type="SMART" id="SM00220">
    <property type="entry name" value="S_TKc"/>
    <property type="match status" value="1"/>
</dbReference>
<dbReference type="SUPFAM" id="SSF52058">
    <property type="entry name" value="L domain-like"/>
    <property type="match status" value="1"/>
</dbReference>
<dbReference type="SUPFAM" id="SSF56112">
    <property type="entry name" value="Protein kinase-like (PK-like)"/>
    <property type="match status" value="1"/>
</dbReference>
<dbReference type="SUPFAM" id="SSF52047">
    <property type="entry name" value="RNI-like"/>
    <property type="match status" value="1"/>
</dbReference>
<dbReference type="PROSITE" id="PS50011">
    <property type="entry name" value="PROTEIN_KINASE_DOM"/>
    <property type="match status" value="1"/>
</dbReference>
<dbReference type="PROSITE" id="PS00108">
    <property type="entry name" value="PROTEIN_KINASE_ST"/>
    <property type="match status" value="1"/>
</dbReference>
<feature type="signal peptide" evidence="1">
    <location>
        <begin position="1"/>
        <end position="17"/>
    </location>
</feature>
<feature type="chain" id="PRO_0000422041" description="Leucine-rich repeat receptor-like kinase protein FLORAL ORGAN NUMBER1">
    <location>
        <begin position="18"/>
        <end position="994"/>
    </location>
</feature>
<feature type="transmembrane region" description="Helical" evidence="1">
    <location>
        <begin position="647"/>
        <end position="667"/>
    </location>
</feature>
<feature type="repeat" description="LRR 1">
    <location>
        <begin position="73"/>
        <end position="93"/>
    </location>
</feature>
<feature type="repeat" description="LRR 2">
    <location>
        <begin position="94"/>
        <end position="117"/>
    </location>
</feature>
<feature type="repeat" description="LRR 3">
    <location>
        <begin position="118"/>
        <end position="141"/>
    </location>
</feature>
<feature type="repeat" description="LRR 4">
    <location>
        <begin position="147"/>
        <end position="171"/>
    </location>
</feature>
<feature type="repeat" description="LRR 5">
    <location>
        <begin position="172"/>
        <end position="194"/>
    </location>
</feature>
<feature type="repeat" description="LRR 6">
    <location>
        <begin position="195"/>
        <end position="219"/>
    </location>
</feature>
<feature type="repeat" description="LRR 7">
    <location>
        <begin position="244"/>
        <end position="268"/>
    </location>
</feature>
<feature type="repeat" description="LRR 8">
    <location>
        <begin position="269"/>
        <end position="292"/>
    </location>
</feature>
<feature type="repeat" description="LRR 9">
    <location>
        <begin position="293"/>
        <end position="316"/>
    </location>
</feature>
<feature type="repeat" description="LRR 10">
    <location>
        <begin position="318"/>
        <end position="340"/>
    </location>
</feature>
<feature type="repeat" description="LRR 11">
    <location>
        <begin position="341"/>
        <end position="364"/>
    </location>
</feature>
<feature type="repeat" description="LRR 12">
    <location>
        <begin position="365"/>
        <end position="388"/>
    </location>
</feature>
<feature type="repeat" description="LRR 13">
    <location>
        <begin position="390"/>
        <end position="412"/>
    </location>
</feature>
<feature type="repeat" description="LRR 14">
    <location>
        <begin position="413"/>
        <end position="436"/>
    </location>
</feature>
<feature type="repeat" description="LRR 15">
    <location>
        <begin position="438"/>
        <end position="459"/>
    </location>
</feature>
<feature type="repeat" description="LRR 16">
    <location>
        <begin position="460"/>
        <end position="483"/>
    </location>
</feature>
<feature type="repeat" description="LRR 17">
    <location>
        <begin position="484"/>
        <end position="507"/>
    </location>
</feature>
<feature type="repeat" description="LRR 18">
    <location>
        <begin position="509"/>
        <end position="531"/>
    </location>
</feature>
<feature type="repeat" description="LRR 19">
    <location>
        <begin position="533"/>
        <end position="555"/>
    </location>
</feature>
<feature type="repeat" description="LRR 20">
    <location>
        <begin position="556"/>
        <end position="579"/>
    </location>
</feature>
<feature type="repeat" description="LRR 21">
    <location>
        <begin position="581"/>
        <end position="604"/>
    </location>
</feature>
<feature type="domain" description="Protein kinase" evidence="2">
    <location>
        <begin position="704"/>
        <end position="978"/>
    </location>
</feature>
<feature type="active site" description="Proton acceptor" evidence="2 3">
    <location>
        <position position="828"/>
    </location>
</feature>
<feature type="binding site" evidence="2">
    <location>
        <begin position="710"/>
        <end position="718"/>
    </location>
    <ligand>
        <name>ATP</name>
        <dbReference type="ChEBI" id="CHEBI:30616"/>
    </ligand>
</feature>
<feature type="binding site" evidence="2">
    <location>
        <position position="731"/>
    </location>
    <ligand>
        <name>ATP</name>
        <dbReference type="ChEBI" id="CHEBI:30616"/>
    </ligand>
</feature>
<feature type="glycosylation site" description="N-linked (GlcNAc...) asparagine" evidence="1">
    <location>
        <position position="75"/>
    </location>
</feature>
<feature type="glycosylation site" description="N-linked (GlcNAc...) asparagine" evidence="1">
    <location>
        <position position="98"/>
    </location>
</feature>
<feature type="glycosylation site" description="N-linked (GlcNAc...) asparagine" evidence="1">
    <location>
        <position position="124"/>
    </location>
</feature>
<feature type="glycosylation site" description="N-linked (GlcNAc...) asparagine" evidence="1">
    <location>
        <position position="129"/>
    </location>
</feature>
<feature type="glycosylation site" description="N-linked (GlcNAc...) asparagine" evidence="1">
    <location>
        <position position="159"/>
    </location>
</feature>
<feature type="glycosylation site" description="N-linked (GlcNAc...) asparagine" evidence="1">
    <location>
        <position position="256"/>
    </location>
</feature>
<feature type="glycosylation site" description="N-linked (GlcNAc...) asparagine" evidence="1">
    <location>
        <position position="315"/>
    </location>
</feature>
<feature type="glycosylation site" description="N-linked (GlcNAc...) asparagine" evidence="1">
    <location>
        <position position="352"/>
    </location>
</feature>
<feature type="glycosylation site" description="N-linked (GlcNAc...) asparagine" evidence="1">
    <location>
        <position position="495"/>
    </location>
</feature>
<feature type="glycosylation site" description="N-linked (GlcNAc...) asparagine" evidence="1">
    <location>
        <position position="509"/>
    </location>
</feature>
<feature type="glycosylation site" description="N-linked (GlcNAc...) asparagine" evidence="1">
    <location>
        <position position="514"/>
    </location>
</feature>
<feature type="glycosylation site" description="N-linked (GlcNAc...) asparagine" evidence="1">
    <location>
        <position position="562"/>
    </location>
</feature>
<feature type="glycosylation site" description="N-linked (GlcNAc...) asparagine" evidence="1">
    <location>
        <position position="578"/>
    </location>
</feature>
<feature type="glycosylation site" description="N-linked (GlcNAc...) asparagine" evidence="1">
    <location>
        <position position="606"/>
    </location>
</feature>
<feature type="mutagenesis site" description="In fon1-2; enlargment of the floral meristem and increased number of floral organs." evidence="4">
    <original>G</original>
    <variation>S</variation>
    <location>
        <position position="205"/>
    </location>
</feature>
<feature type="mutagenesis site" description="In fon1-1; enlargment of the floral meristem and increased number of floral organs." evidence="4">
    <original>P</original>
    <variation>L</variation>
    <location>
        <position position="903"/>
    </location>
</feature>
<keyword id="KW-0067">ATP-binding</keyword>
<keyword id="KW-0217">Developmental protein</keyword>
<keyword id="KW-0221">Differentiation</keyword>
<keyword id="KW-0325">Glycoprotein</keyword>
<keyword id="KW-0418">Kinase</keyword>
<keyword id="KW-0433">Leucine-rich repeat</keyword>
<keyword id="KW-0472">Membrane</keyword>
<keyword id="KW-0547">Nucleotide-binding</keyword>
<keyword id="KW-0675">Receptor</keyword>
<keyword id="KW-1185">Reference proteome</keyword>
<keyword id="KW-0677">Repeat</keyword>
<keyword id="KW-0723">Serine/threonine-protein kinase</keyword>
<keyword id="KW-0732">Signal</keyword>
<keyword id="KW-0808">Transferase</keyword>
<keyword id="KW-0812">Transmembrane</keyword>
<keyword id="KW-1133">Transmembrane helix</keyword>
<proteinExistence type="evidence at protein level"/>